<name>RSMC_SHIBS</name>
<reference key="1">
    <citation type="journal article" date="2005" name="Nucleic Acids Res.">
        <title>Genome dynamics and diversity of Shigella species, the etiologic agents of bacillary dysentery.</title>
        <authorList>
            <person name="Yang F."/>
            <person name="Yang J."/>
            <person name="Zhang X."/>
            <person name="Chen L."/>
            <person name="Jiang Y."/>
            <person name="Yan Y."/>
            <person name="Tang X."/>
            <person name="Wang J."/>
            <person name="Xiong Z."/>
            <person name="Dong J."/>
            <person name="Xue Y."/>
            <person name="Zhu Y."/>
            <person name="Xu X."/>
            <person name="Sun L."/>
            <person name="Chen S."/>
            <person name="Nie H."/>
            <person name="Peng J."/>
            <person name="Xu J."/>
            <person name="Wang Y."/>
            <person name="Yuan Z."/>
            <person name="Wen Y."/>
            <person name="Yao Z."/>
            <person name="Shen Y."/>
            <person name="Qiang B."/>
            <person name="Hou Y."/>
            <person name="Yu J."/>
            <person name="Jin Q."/>
        </authorList>
    </citation>
    <scope>NUCLEOTIDE SEQUENCE [LARGE SCALE GENOMIC DNA]</scope>
    <source>
        <strain>Sb227</strain>
    </source>
</reference>
<feature type="chain" id="PRO_0000369785" description="Ribosomal RNA small subunit methyltransferase C">
    <location>
        <begin position="1"/>
        <end position="343"/>
    </location>
</feature>
<proteinExistence type="inferred from homology"/>
<organism>
    <name type="scientific">Shigella boydii serotype 4 (strain Sb227)</name>
    <dbReference type="NCBI Taxonomy" id="300268"/>
    <lineage>
        <taxon>Bacteria</taxon>
        <taxon>Pseudomonadati</taxon>
        <taxon>Pseudomonadota</taxon>
        <taxon>Gammaproteobacteria</taxon>
        <taxon>Enterobacterales</taxon>
        <taxon>Enterobacteriaceae</taxon>
        <taxon>Shigella</taxon>
    </lineage>
</organism>
<evidence type="ECO:0000255" key="1">
    <source>
        <dbReference type="HAMAP-Rule" id="MF_01862"/>
    </source>
</evidence>
<gene>
    <name evidence="1" type="primary">rsmC</name>
    <name type="ordered locus">SBO_4432</name>
</gene>
<protein>
    <recommendedName>
        <fullName evidence="1">Ribosomal RNA small subunit methyltransferase C</fullName>
        <ecNumber evidence="1">2.1.1.172</ecNumber>
    </recommendedName>
    <alternativeName>
        <fullName evidence="1">16S rRNA m2G1207 methyltransferase</fullName>
    </alternativeName>
    <alternativeName>
        <fullName evidence="1">rRNA (guanine-N(2)-)-methyltransferase RsmC</fullName>
    </alternativeName>
</protein>
<comment type="function">
    <text evidence="1">Specifically methylates the guanine in position 1207 of 16S rRNA in the 30S particle.</text>
</comment>
<comment type="catalytic activity">
    <reaction evidence="1">
        <text>guanosine(1207) in 16S rRNA + S-adenosyl-L-methionine = N(2)-methylguanosine(1207) in 16S rRNA + S-adenosyl-L-homocysteine + H(+)</text>
        <dbReference type="Rhea" id="RHEA:42736"/>
        <dbReference type="Rhea" id="RHEA-COMP:10213"/>
        <dbReference type="Rhea" id="RHEA-COMP:10214"/>
        <dbReference type="ChEBI" id="CHEBI:15378"/>
        <dbReference type="ChEBI" id="CHEBI:57856"/>
        <dbReference type="ChEBI" id="CHEBI:59789"/>
        <dbReference type="ChEBI" id="CHEBI:74269"/>
        <dbReference type="ChEBI" id="CHEBI:74481"/>
        <dbReference type="EC" id="2.1.1.172"/>
    </reaction>
</comment>
<comment type="subunit">
    <text evidence="1">Monomer.</text>
</comment>
<comment type="subcellular location">
    <subcellularLocation>
        <location evidence="1">Cytoplasm</location>
    </subcellularLocation>
</comment>
<comment type="similarity">
    <text evidence="1">Belongs to the methyltransferase superfamily. RsmC family.</text>
</comment>
<dbReference type="EC" id="2.1.1.172" evidence="1"/>
<dbReference type="EMBL" id="CP000036">
    <property type="protein sequence ID" value="ABB68840.1"/>
    <property type="molecule type" value="Genomic_DNA"/>
</dbReference>
<dbReference type="RefSeq" id="WP_001272346.1">
    <property type="nucleotide sequence ID" value="NC_007613.1"/>
</dbReference>
<dbReference type="SMR" id="Q31SW8"/>
<dbReference type="KEGG" id="sbo:SBO_4432"/>
<dbReference type="HOGENOM" id="CLU_049581_0_1_6"/>
<dbReference type="Proteomes" id="UP000007067">
    <property type="component" value="Chromosome"/>
</dbReference>
<dbReference type="GO" id="GO:0005737">
    <property type="term" value="C:cytoplasm"/>
    <property type="evidence" value="ECO:0007669"/>
    <property type="project" value="UniProtKB-SubCell"/>
</dbReference>
<dbReference type="GO" id="GO:0052914">
    <property type="term" value="F:16S rRNA (guanine(1207)-N(2))-methyltransferase activity"/>
    <property type="evidence" value="ECO:0007669"/>
    <property type="project" value="UniProtKB-EC"/>
</dbReference>
<dbReference type="GO" id="GO:0003676">
    <property type="term" value="F:nucleic acid binding"/>
    <property type="evidence" value="ECO:0007669"/>
    <property type="project" value="InterPro"/>
</dbReference>
<dbReference type="CDD" id="cd02440">
    <property type="entry name" value="AdoMet_MTases"/>
    <property type="match status" value="1"/>
</dbReference>
<dbReference type="FunFam" id="3.40.50.150:FF:000058">
    <property type="entry name" value="Ribosomal RNA small subunit methyltransferase C"/>
    <property type="match status" value="1"/>
</dbReference>
<dbReference type="FunFam" id="3.40.50.150:FF:000063">
    <property type="entry name" value="Ribosomal RNA small subunit methyltransferase C"/>
    <property type="match status" value="1"/>
</dbReference>
<dbReference type="Gene3D" id="3.40.50.150">
    <property type="entry name" value="Vaccinia Virus protein VP39"/>
    <property type="match status" value="2"/>
</dbReference>
<dbReference type="HAMAP" id="MF_01862">
    <property type="entry name" value="16SrRNA_methyltr_C"/>
    <property type="match status" value="1"/>
</dbReference>
<dbReference type="InterPro" id="IPR002052">
    <property type="entry name" value="DNA_methylase_N6_adenine_CS"/>
</dbReference>
<dbReference type="InterPro" id="IPR013675">
    <property type="entry name" value="Mtase_sm_N"/>
</dbReference>
<dbReference type="InterPro" id="IPR023543">
    <property type="entry name" value="rRNA_ssu_MeTfrase_C"/>
</dbReference>
<dbReference type="InterPro" id="IPR046977">
    <property type="entry name" value="RsmC/RlmG"/>
</dbReference>
<dbReference type="InterPro" id="IPR029063">
    <property type="entry name" value="SAM-dependent_MTases_sf"/>
</dbReference>
<dbReference type="InterPro" id="IPR007848">
    <property type="entry name" value="Small_mtfrase_dom"/>
</dbReference>
<dbReference type="NCBIfam" id="NF007023">
    <property type="entry name" value="PRK09489.1"/>
    <property type="match status" value="1"/>
</dbReference>
<dbReference type="PANTHER" id="PTHR47816">
    <property type="entry name" value="RIBOSOMAL RNA SMALL SUBUNIT METHYLTRANSFERASE C"/>
    <property type="match status" value="1"/>
</dbReference>
<dbReference type="PANTHER" id="PTHR47816:SF4">
    <property type="entry name" value="RIBOSOMAL RNA SMALL SUBUNIT METHYLTRANSFERASE C"/>
    <property type="match status" value="1"/>
</dbReference>
<dbReference type="Pfam" id="PF05175">
    <property type="entry name" value="MTS"/>
    <property type="match status" value="1"/>
</dbReference>
<dbReference type="Pfam" id="PF08468">
    <property type="entry name" value="MTS_N"/>
    <property type="match status" value="1"/>
</dbReference>
<dbReference type="SUPFAM" id="SSF53335">
    <property type="entry name" value="S-adenosyl-L-methionine-dependent methyltransferases"/>
    <property type="match status" value="1"/>
</dbReference>
<keyword id="KW-0963">Cytoplasm</keyword>
<keyword id="KW-0489">Methyltransferase</keyword>
<keyword id="KW-0698">rRNA processing</keyword>
<keyword id="KW-0949">S-adenosyl-L-methionine</keyword>
<keyword id="KW-0808">Transferase</keyword>
<sequence length="343" mass="37715">MSAFTPASEVLLRHSDDFEQSRILFAGDLQDDLPARLDTAASRAHTQQFHHWQVLSRQMGDNARFSLVATVDDVADCDTLIYYWPKNKPEAQFQLMNLLSLLPVGTDIFVVGENRSGVRSAEQMLADYAPLNKVDSARRCGLYFGRLEKQPVFDADKFWGEYSVDGLTVKTLPSVFSRDGLDVGSQLLLSTLTPHTKGKVLDVGCGAGVLSVAFARHSPKIRLTLCDVSAPAVEASRATLAANCVEGEVFASNVFSEVKGRFDMIISNPPFHDGMQTSLDAAQTLIRGAVRHLNSGGELRIVANAFLPYPDVLDETFGFHEVIAQTGRFKVYRAIMTRQAKKG</sequence>
<accession>Q31SW8</accession>